<dbReference type="EMBL" id="CP001364">
    <property type="protein sequence ID" value="ACM53960.1"/>
    <property type="molecule type" value="Genomic_DNA"/>
</dbReference>
<dbReference type="SMR" id="B9LJE4"/>
<dbReference type="KEGG" id="chl:Chy400_2568"/>
<dbReference type="HOGENOM" id="CLU_061015_2_1_0"/>
<dbReference type="OrthoDB" id="9806626at2"/>
<dbReference type="GO" id="GO:1990904">
    <property type="term" value="C:ribonucleoprotein complex"/>
    <property type="evidence" value="ECO:0007669"/>
    <property type="project" value="UniProtKB-KW"/>
</dbReference>
<dbReference type="GO" id="GO:0005840">
    <property type="term" value="C:ribosome"/>
    <property type="evidence" value="ECO:0007669"/>
    <property type="project" value="UniProtKB-KW"/>
</dbReference>
<dbReference type="GO" id="GO:0019843">
    <property type="term" value="F:rRNA binding"/>
    <property type="evidence" value="ECO:0007669"/>
    <property type="project" value="UniProtKB-UniRule"/>
</dbReference>
<dbReference type="GO" id="GO:0003735">
    <property type="term" value="F:structural constituent of ribosome"/>
    <property type="evidence" value="ECO:0007669"/>
    <property type="project" value="InterPro"/>
</dbReference>
<dbReference type="GO" id="GO:0000049">
    <property type="term" value="F:tRNA binding"/>
    <property type="evidence" value="ECO:0007669"/>
    <property type="project" value="UniProtKB-UniRule"/>
</dbReference>
<dbReference type="GO" id="GO:0006412">
    <property type="term" value="P:translation"/>
    <property type="evidence" value="ECO:0007669"/>
    <property type="project" value="UniProtKB-UniRule"/>
</dbReference>
<dbReference type="FunFam" id="3.30.1440.10:FF:000001">
    <property type="entry name" value="50S ribosomal protein L5"/>
    <property type="match status" value="1"/>
</dbReference>
<dbReference type="Gene3D" id="3.30.1440.10">
    <property type="match status" value="1"/>
</dbReference>
<dbReference type="HAMAP" id="MF_01333_B">
    <property type="entry name" value="Ribosomal_uL5_B"/>
    <property type="match status" value="1"/>
</dbReference>
<dbReference type="InterPro" id="IPR002132">
    <property type="entry name" value="Ribosomal_uL5"/>
</dbReference>
<dbReference type="InterPro" id="IPR020930">
    <property type="entry name" value="Ribosomal_uL5_bac-type"/>
</dbReference>
<dbReference type="InterPro" id="IPR031309">
    <property type="entry name" value="Ribosomal_uL5_C"/>
</dbReference>
<dbReference type="InterPro" id="IPR020929">
    <property type="entry name" value="Ribosomal_uL5_CS"/>
</dbReference>
<dbReference type="InterPro" id="IPR022803">
    <property type="entry name" value="Ribosomal_uL5_dom_sf"/>
</dbReference>
<dbReference type="InterPro" id="IPR031310">
    <property type="entry name" value="Ribosomal_uL5_N"/>
</dbReference>
<dbReference type="NCBIfam" id="NF000585">
    <property type="entry name" value="PRK00010.1"/>
    <property type="match status" value="1"/>
</dbReference>
<dbReference type="PANTHER" id="PTHR11994">
    <property type="entry name" value="60S RIBOSOMAL PROTEIN L11-RELATED"/>
    <property type="match status" value="1"/>
</dbReference>
<dbReference type="Pfam" id="PF00281">
    <property type="entry name" value="Ribosomal_L5"/>
    <property type="match status" value="1"/>
</dbReference>
<dbReference type="Pfam" id="PF00673">
    <property type="entry name" value="Ribosomal_L5_C"/>
    <property type="match status" value="1"/>
</dbReference>
<dbReference type="PIRSF" id="PIRSF002161">
    <property type="entry name" value="Ribosomal_L5"/>
    <property type="match status" value="1"/>
</dbReference>
<dbReference type="SUPFAM" id="SSF55282">
    <property type="entry name" value="RL5-like"/>
    <property type="match status" value="1"/>
</dbReference>
<dbReference type="PROSITE" id="PS00358">
    <property type="entry name" value="RIBOSOMAL_L5"/>
    <property type="match status" value="1"/>
</dbReference>
<sequence>MTVRLREKYQKEVVPALMEEFKFKSIMQVPRLVKIVVNVGVGEAVQNAKAIEAAVNDLATITGQKPVVTRAKKSVASFKLRAGMPIGAMVTLRGDRMYDFLDRLCSLALPRIRDFRGVSRSSFDGRGNYSLGLREQIVFPDIDYDKIDKIRGLEVAIVTSAPNDEQAYALLKRLGMPFRD</sequence>
<organism>
    <name type="scientific">Chloroflexus aurantiacus (strain ATCC 29364 / DSM 637 / Y-400-fl)</name>
    <dbReference type="NCBI Taxonomy" id="480224"/>
    <lineage>
        <taxon>Bacteria</taxon>
        <taxon>Bacillati</taxon>
        <taxon>Chloroflexota</taxon>
        <taxon>Chloroflexia</taxon>
        <taxon>Chloroflexales</taxon>
        <taxon>Chloroflexineae</taxon>
        <taxon>Chloroflexaceae</taxon>
        <taxon>Chloroflexus</taxon>
    </lineage>
</organism>
<name>RL5_CHLSY</name>
<keyword id="KW-0687">Ribonucleoprotein</keyword>
<keyword id="KW-0689">Ribosomal protein</keyword>
<keyword id="KW-0694">RNA-binding</keyword>
<keyword id="KW-0699">rRNA-binding</keyword>
<keyword id="KW-0820">tRNA-binding</keyword>
<accession>B9LJE4</accession>
<gene>
    <name evidence="1" type="primary">rplE</name>
    <name type="ordered locus">Chy400_2568</name>
</gene>
<feature type="chain" id="PRO_1000166122" description="Large ribosomal subunit protein uL5">
    <location>
        <begin position="1"/>
        <end position="180"/>
    </location>
</feature>
<comment type="function">
    <text evidence="1">This is one of the proteins that bind and probably mediate the attachment of the 5S RNA into the large ribosomal subunit, where it forms part of the central protuberance. In the 70S ribosome it contacts protein S13 of the 30S subunit (bridge B1b), connecting the 2 subunits; this bridge is implicated in subunit movement. Contacts the P site tRNA; the 5S rRNA and some of its associated proteins might help stabilize positioning of ribosome-bound tRNAs.</text>
</comment>
<comment type="subunit">
    <text evidence="1">Part of the 50S ribosomal subunit; part of the 5S rRNA/L5/L18/L25 subcomplex. Contacts the 5S rRNA and the P site tRNA. Forms a bridge to the 30S subunit in the 70S ribosome.</text>
</comment>
<comment type="similarity">
    <text evidence="1">Belongs to the universal ribosomal protein uL5 family.</text>
</comment>
<evidence type="ECO:0000255" key="1">
    <source>
        <dbReference type="HAMAP-Rule" id="MF_01333"/>
    </source>
</evidence>
<evidence type="ECO:0000305" key="2"/>
<reference key="1">
    <citation type="submission" date="2009-01" db="EMBL/GenBank/DDBJ databases">
        <title>Complete sequence of Chloroflexus sp. Y-400-fl.</title>
        <authorList>
            <consortium name="US DOE Joint Genome Institute"/>
            <person name="Lucas S."/>
            <person name="Copeland A."/>
            <person name="Lapidus A."/>
            <person name="Glavina del Rio T."/>
            <person name="Dalin E."/>
            <person name="Tice H."/>
            <person name="Bruce D."/>
            <person name="Goodwin L."/>
            <person name="Pitluck S."/>
            <person name="Sims D."/>
            <person name="Kiss H."/>
            <person name="Brettin T."/>
            <person name="Detter J.C."/>
            <person name="Han C."/>
            <person name="Larimer F."/>
            <person name="Land M."/>
            <person name="Hauser L."/>
            <person name="Kyrpides N."/>
            <person name="Ovchinnikova G."/>
            <person name="Bryant D.A."/>
            <person name="Richardson P."/>
        </authorList>
    </citation>
    <scope>NUCLEOTIDE SEQUENCE [LARGE SCALE GENOMIC DNA]</scope>
    <source>
        <strain>ATCC 29364 / DSM 637 / Y-400-fl</strain>
    </source>
</reference>
<proteinExistence type="inferred from homology"/>
<protein>
    <recommendedName>
        <fullName evidence="1">Large ribosomal subunit protein uL5</fullName>
    </recommendedName>
    <alternativeName>
        <fullName evidence="2">50S ribosomal protein L5</fullName>
    </alternativeName>
</protein>